<gene>
    <name evidence="1" type="primary">rsmC</name>
    <name type="ordered locus">Sbal_3530</name>
</gene>
<proteinExistence type="inferred from homology"/>
<name>RSMC_SHEB5</name>
<accession>A3D8E4</accession>
<organism>
    <name type="scientific">Shewanella baltica (strain OS155 / ATCC BAA-1091)</name>
    <dbReference type="NCBI Taxonomy" id="325240"/>
    <lineage>
        <taxon>Bacteria</taxon>
        <taxon>Pseudomonadati</taxon>
        <taxon>Pseudomonadota</taxon>
        <taxon>Gammaproteobacteria</taxon>
        <taxon>Alteromonadales</taxon>
        <taxon>Shewanellaceae</taxon>
        <taxon>Shewanella</taxon>
    </lineage>
</organism>
<sequence length="347" mass="37879">MLTNPSQVIIRNQDSLSQHKVLVLNHEADLLPKALLDVAASVDALALDYHHYLHLAPHANTKLRCYFGHDLPHQDPLEREKYDTVIVYFPKAKPLAPYLFNLAANHLVPNGQLLVVGENKGGIKSLVKLLPEYFATGMKLDNARHCLLFGSSLEGSAPAMKLSDWVSQYQLTTPQGEISICNLVGVFSEKRLDLGTELLLSHLPTLSGRVLDFGCGAGVIAAALLKAQPSLSLECVDINAMALASCELTLAANGMTAKVYPSDGLAQTTGKFNGIISNPPFHDGLASTTSIAQNFVTDSAKQLQHNGIWQIVANRHLPYSDIIAAEFGQLKVVADNNKYKLYYFQHK</sequence>
<feature type="chain" id="PRO_0000369767" description="Ribosomal RNA small subunit methyltransferase C">
    <location>
        <begin position="1"/>
        <end position="347"/>
    </location>
</feature>
<protein>
    <recommendedName>
        <fullName evidence="1">Ribosomal RNA small subunit methyltransferase C</fullName>
        <ecNumber evidence="1">2.1.1.172</ecNumber>
    </recommendedName>
    <alternativeName>
        <fullName evidence="1">16S rRNA m2G1207 methyltransferase</fullName>
    </alternativeName>
    <alternativeName>
        <fullName evidence="1">rRNA (guanine-N(2)-)-methyltransferase RsmC</fullName>
    </alternativeName>
</protein>
<reference key="1">
    <citation type="submission" date="2007-02" db="EMBL/GenBank/DDBJ databases">
        <title>Complete sequence of chromosome of Shewanella baltica OS155.</title>
        <authorList>
            <consortium name="US DOE Joint Genome Institute"/>
            <person name="Copeland A."/>
            <person name="Lucas S."/>
            <person name="Lapidus A."/>
            <person name="Barry K."/>
            <person name="Detter J.C."/>
            <person name="Glavina del Rio T."/>
            <person name="Hammon N."/>
            <person name="Israni S."/>
            <person name="Dalin E."/>
            <person name="Tice H."/>
            <person name="Pitluck S."/>
            <person name="Sims D.R."/>
            <person name="Brettin T."/>
            <person name="Bruce D."/>
            <person name="Han C."/>
            <person name="Tapia R."/>
            <person name="Brainard J."/>
            <person name="Schmutz J."/>
            <person name="Larimer F."/>
            <person name="Land M."/>
            <person name="Hauser L."/>
            <person name="Kyrpides N."/>
            <person name="Mikhailova N."/>
            <person name="Brettar I."/>
            <person name="Klappenbach J."/>
            <person name="Konstantinidis K."/>
            <person name="Rodrigues J."/>
            <person name="Tiedje J."/>
            <person name="Richardson P."/>
        </authorList>
    </citation>
    <scope>NUCLEOTIDE SEQUENCE [LARGE SCALE GENOMIC DNA]</scope>
    <source>
        <strain>OS155 / ATCC BAA-1091</strain>
    </source>
</reference>
<keyword id="KW-0963">Cytoplasm</keyword>
<keyword id="KW-0489">Methyltransferase</keyword>
<keyword id="KW-1185">Reference proteome</keyword>
<keyword id="KW-0698">rRNA processing</keyword>
<keyword id="KW-0949">S-adenosyl-L-methionine</keyword>
<keyword id="KW-0808">Transferase</keyword>
<dbReference type="EC" id="2.1.1.172" evidence="1"/>
<dbReference type="EMBL" id="CP000563">
    <property type="protein sequence ID" value="ABN63007.1"/>
    <property type="molecule type" value="Genomic_DNA"/>
</dbReference>
<dbReference type="RefSeq" id="WP_011847725.1">
    <property type="nucleotide sequence ID" value="NC_009052.1"/>
</dbReference>
<dbReference type="SMR" id="A3D8E4"/>
<dbReference type="STRING" id="325240.Sbal_3530"/>
<dbReference type="KEGG" id="sbl:Sbal_3530"/>
<dbReference type="HOGENOM" id="CLU_049581_0_1_6"/>
<dbReference type="OrthoDB" id="9816072at2"/>
<dbReference type="Proteomes" id="UP000001557">
    <property type="component" value="Chromosome"/>
</dbReference>
<dbReference type="GO" id="GO:0005737">
    <property type="term" value="C:cytoplasm"/>
    <property type="evidence" value="ECO:0007669"/>
    <property type="project" value="UniProtKB-SubCell"/>
</dbReference>
<dbReference type="GO" id="GO:0052914">
    <property type="term" value="F:16S rRNA (guanine(1207)-N(2))-methyltransferase activity"/>
    <property type="evidence" value="ECO:0007669"/>
    <property type="project" value="UniProtKB-EC"/>
</dbReference>
<dbReference type="GO" id="GO:0003676">
    <property type="term" value="F:nucleic acid binding"/>
    <property type="evidence" value="ECO:0007669"/>
    <property type="project" value="InterPro"/>
</dbReference>
<dbReference type="CDD" id="cd02440">
    <property type="entry name" value="AdoMet_MTases"/>
    <property type="match status" value="1"/>
</dbReference>
<dbReference type="Gene3D" id="3.40.50.150">
    <property type="entry name" value="Vaccinia Virus protein VP39"/>
    <property type="match status" value="2"/>
</dbReference>
<dbReference type="HAMAP" id="MF_01862">
    <property type="entry name" value="16SrRNA_methyltr_C"/>
    <property type="match status" value="1"/>
</dbReference>
<dbReference type="InterPro" id="IPR002052">
    <property type="entry name" value="DNA_methylase_N6_adenine_CS"/>
</dbReference>
<dbReference type="InterPro" id="IPR013675">
    <property type="entry name" value="Mtase_sm_N"/>
</dbReference>
<dbReference type="InterPro" id="IPR023543">
    <property type="entry name" value="rRNA_ssu_MeTfrase_C"/>
</dbReference>
<dbReference type="InterPro" id="IPR046977">
    <property type="entry name" value="RsmC/RlmG"/>
</dbReference>
<dbReference type="InterPro" id="IPR029063">
    <property type="entry name" value="SAM-dependent_MTases_sf"/>
</dbReference>
<dbReference type="InterPro" id="IPR007848">
    <property type="entry name" value="Small_mtfrase_dom"/>
</dbReference>
<dbReference type="PANTHER" id="PTHR47816">
    <property type="entry name" value="RIBOSOMAL RNA SMALL SUBUNIT METHYLTRANSFERASE C"/>
    <property type="match status" value="1"/>
</dbReference>
<dbReference type="PANTHER" id="PTHR47816:SF4">
    <property type="entry name" value="RIBOSOMAL RNA SMALL SUBUNIT METHYLTRANSFERASE C"/>
    <property type="match status" value="1"/>
</dbReference>
<dbReference type="Pfam" id="PF05175">
    <property type="entry name" value="MTS"/>
    <property type="match status" value="1"/>
</dbReference>
<dbReference type="Pfam" id="PF08468">
    <property type="entry name" value="MTS_N"/>
    <property type="match status" value="1"/>
</dbReference>
<dbReference type="SUPFAM" id="SSF53335">
    <property type="entry name" value="S-adenosyl-L-methionine-dependent methyltransferases"/>
    <property type="match status" value="2"/>
</dbReference>
<comment type="function">
    <text evidence="1">Specifically methylates the guanine in position 1207 of 16S rRNA in the 30S particle.</text>
</comment>
<comment type="catalytic activity">
    <reaction evidence="1">
        <text>guanosine(1207) in 16S rRNA + S-adenosyl-L-methionine = N(2)-methylguanosine(1207) in 16S rRNA + S-adenosyl-L-homocysteine + H(+)</text>
        <dbReference type="Rhea" id="RHEA:42736"/>
        <dbReference type="Rhea" id="RHEA-COMP:10213"/>
        <dbReference type="Rhea" id="RHEA-COMP:10214"/>
        <dbReference type="ChEBI" id="CHEBI:15378"/>
        <dbReference type="ChEBI" id="CHEBI:57856"/>
        <dbReference type="ChEBI" id="CHEBI:59789"/>
        <dbReference type="ChEBI" id="CHEBI:74269"/>
        <dbReference type="ChEBI" id="CHEBI:74481"/>
        <dbReference type="EC" id="2.1.1.172"/>
    </reaction>
</comment>
<comment type="subunit">
    <text evidence="1">Monomer.</text>
</comment>
<comment type="subcellular location">
    <subcellularLocation>
        <location evidence="1">Cytoplasm</location>
    </subcellularLocation>
</comment>
<comment type="similarity">
    <text evidence="1">Belongs to the methyltransferase superfamily. RsmC family.</text>
</comment>
<evidence type="ECO:0000255" key="1">
    <source>
        <dbReference type="HAMAP-Rule" id="MF_01862"/>
    </source>
</evidence>